<feature type="chain" id="PRO_1000166210" description="Large ribosomal subunit protein uL18">
    <location>
        <begin position="1"/>
        <end position="118"/>
    </location>
</feature>
<accession>C0QW11</accession>
<name>RL18_BRAHW</name>
<keyword id="KW-0687">Ribonucleoprotein</keyword>
<keyword id="KW-0689">Ribosomal protein</keyword>
<keyword id="KW-0694">RNA-binding</keyword>
<keyword id="KW-0699">rRNA-binding</keyword>
<organism>
    <name type="scientific">Brachyspira hyodysenteriae (strain ATCC 49526 / WA1)</name>
    <dbReference type="NCBI Taxonomy" id="565034"/>
    <lineage>
        <taxon>Bacteria</taxon>
        <taxon>Pseudomonadati</taxon>
        <taxon>Spirochaetota</taxon>
        <taxon>Spirochaetia</taxon>
        <taxon>Brachyspirales</taxon>
        <taxon>Brachyspiraceae</taxon>
        <taxon>Brachyspira</taxon>
    </lineage>
</organism>
<protein>
    <recommendedName>
        <fullName evidence="1">Large ribosomal subunit protein uL18</fullName>
    </recommendedName>
    <alternativeName>
        <fullName evidence="2">50S ribosomal protein L18</fullName>
    </alternativeName>
</protein>
<sequence length="118" mass="13211">MGLREKIKAQRERRKRSIRIKIEGSSERPRLTVHKSLKYVSAQIIDDSKGITLASASSQEKDLKSGKNVDIAKEIGKVLATRAKEKNISEVVFDRNGYIYHGKIKSLADGAREAGLKF</sequence>
<gene>
    <name evidence="1" type="primary">rplR</name>
    <name type="ordered locus">BHWA1_02139</name>
</gene>
<proteinExistence type="inferred from homology"/>
<reference key="1">
    <citation type="journal article" date="2009" name="PLoS ONE">
        <title>Genome sequence of the pathogenic intestinal spirochete Brachyspira hyodysenteriae reveals adaptations to its lifestyle in the porcine large intestine.</title>
        <authorList>
            <person name="Bellgard M.I."/>
            <person name="Wanchanthuek P."/>
            <person name="La T."/>
            <person name="Ryan K."/>
            <person name="Moolhuijzen P."/>
            <person name="Albertyn Z."/>
            <person name="Shaban B."/>
            <person name="Motro Y."/>
            <person name="Dunn D.S."/>
            <person name="Schibeci D."/>
            <person name="Hunter A."/>
            <person name="Barrero R."/>
            <person name="Phillips N.D."/>
            <person name="Hampson D.J."/>
        </authorList>
    </citation>
    <scope>NUCLEOTIDE SEQUENCE [LARGE SCALE GENOMIC DNA]</scope>
    <source>
        <strain>ATCC 49526 / WA1</strain>
    </source>
</reference>
<comment type="function">
    <text evidence="1">This is one of the proteins that bind and probably mediate the attachment of the 5S RNA into the large ribosomal subunit, where it forms part of the central protuberance.</text>
</comment>
<comment type="subunit">
    <text evidence="1">Part of the 50S ribosomal subunit; part of the 5S rRNA/L5/L18/L25 subcomplex. Contacts the 5S and 23S rRNAs.</text>
</comment>
<comment type="similarity">
    <text evidence="1">Belongs to the universal ribosomal protein uL18 family.</text>
</comment>
<dbReference type="EMBL" id="CP001357">
    <property type="protein sequence ID" value="ACN84597.1"/>
    <property type="molecule type" value="Genomic_DNA"/>
</dbReference>
<dbReference type="RefSeq" id="WP_012671631.1">
    <property type="nucleotide sequence ID" value="NC_012225.1"/>
</dbReference>
<dbReference type="SMR" id="C0QW11"/>
<dbReference type="STRING" id="565034.BHWA1_02139"/>
<dbReference type="GeneID" id="63963292"/>
<dbReference type="KEGG" id="bhy:BHWA1_02139"/>
<dbReference type="eggNOG" id="COG0256">
    <property type="taxonomic scope" value="Bacteria"/>
</dbReference>
<dbReference type="HOGENOM" id="CLU_098841_0_1_12"/>
<dbReference type="Proteomes" id="UP000001803">
    <property type="component" value="Chromosome"/>
</dbReference>
<dbReference type="GO" id="GO:0005737">
    <property type="term" value="C:cytoplasm"/>
    <property type="evidence" value="ECO:0007669"/>
    <property type="project" value="UniProtKB-ARBA"/>
</dbReference>
<dbReference type="GO" id="GO:1990904">
    <property type="term" value="C:ribonucleoprotein complex"/>
    <property type="evidence" value="ECO:0007669"/>
    <property type="project" value="UniProtKB-KW"/>
</dbReference>
<dbReference type="GO" id="GO:0005840">
    <property type="term" value="C:ribosome"/>
    <property type="evidence" value="ECO:0007669"/>
    <property type="project" value="UniProtKB-KW"/>
</dbReference>
<dbReference type="GO" id="GO:0008097">
    <property type="term" value="F:5S rRNA binding"/>
    <property type="evidence" value="ECO:0007669"/>
    <property type="project" value="TreeGrafter"/>
</dbReference>
<dbReference type="GO" id="GO:0003735">
    <property type="term" value="F:structural constituent of ribosome"/>
    <property type="evidence" value="ECO:0007669"/>
    <property type="project" value="InterPro"/>
</dbReference>
<dbReference type="GO" id="GO:0006412">
    <property type="term" value="P:translation"/>
    <property type="evidence" value="ECO:0007669"/>
    <property type="project" value="UniProtKB-UniRule"/>
</dbReference>
<dbReference type="CDD" id="cd00432">
    <property type="entry name" value="Ribosomal_L18_L5e"/>
    <property type="match status" value="1"/>
</dbReference>
<dbReference type="FunFam" id="3.30.420.100:FF:000001">
    <property type="entry name" value="50S ribosomal protein L18"/>
    <property type="match status" value="1"/>
</dbReference>
<dbReference type="Gene3D" id="3.30.420.100">
    <property type="match status" value="1"/>
</dbReference>
<dbReference type="HAMAP" id="MF_01337_B">
    <property type="entry name" value="Ribosomal_uL18_B"/>
    <property type="match status" value="1"/>
</dbReference>
<dbReference type="InterPro" id="IPR004389">
    <property type="entry name" value="Ribosomal_uL18_bac-type"/>
</dbReference>
<dbReference type="InterPro" id="IPR005484">
    <property type="entry name" value="Ribosomal_uL18_bac/euk"/>
</dbReference>
<dbReference type="NCBIfam" id="TIGR00060">
    <property type="entry name" value="L18_bact"/>
    <property type="match status" value="1"/>
</dbReference>
<dbReference type="PANTHER" id="PTHR12899">
    <property type="entry name" value="39S RIBOSOMAL PROTEIN L18, MITOCHONDRIAL"/>
    <property type="match status" value="1"/>
</dbReference>
<dbReference type="PANTHER" id="PTHR12899:SF3">
    <property type="entry name" value="LARGE RIBOSOMAL SUBUNIT PROTEIN UL18M"/>
    <property type="match status" value="1"/>
</dbReference>
<dbReference type="Pfam" id="PF00861">
    <property type="entry name" value="Ribosomal_L18p"/>
    <property type="match status" value="1"/>
</dbReference>
<dbReference type="SUPFAM" id="SSF53137">
    <property type="entry name" value="Translational machinery components"/>
    <property type="match status" value="1"/>
</dbReference>
<evidence type="ECO:0000255" key="1">
    <source>
        <dbReference type="HAMAP-Rule" id="MF_01337"/>
    </source>
</evidence>
<evidence type="ECO:0000305" key="2"/>